<evidence type="ECO:0000250" key="1"/>
<evidence type="ECO:0000255" key="2"/>
<evidence type="ECO:0000269" key="3">
    <source>
    </source>
</evidence>
<evidence type="ECO:0000269" key="4">
    <source>
    </source>
</evidence>
<evidence type="ECO:0000269" key="5">
    <source>
    </source>
</evidence>
<evidence type="ECO:0000269" key="6">
    <source>
    </source>
</evidence>
<evidence type="ECO:0000305" key="7"/>
<reference key="1">
    <citation type="journal article" date="1998" name="Nature">
        <title>Deciphering the biology of Mycobacterium tuberculosis from the complete genome sequence.</title>
        <authorList>
            <person name="Cole S.T."/>
            <person name="Brosch R."/>
            <person name="Parkhill J."/>
            <person name="Garnier T."/>
            <person name="Churcher C.M."/>
            <person name="Harris D.E."/>
            <person name="Gordon S.V."/>
            <person name="Eiglmeier K."/>
            <person name="Gas S."/>
            <person name="Barry C.E. III"/>
            <person name="Tekaia F."/>
            <person name="Badcock K."/>
            <person name="Basham D."/>
            <person name="Brown D."/>
            <person name="Chillingworth T."/>
            <person name="Connor R."/>
            <person name="Davies R.M."/>
            <person name="Devlin K."/>
            <person name="Feltwell T."/>
            <person name="Gentles S."/>
            <person name="Hamlin N."/>
            <person name="Holroyd S."/>
            <person name="Hornsby T."/>
            <person name="Jagels K."/>
            <person name="Krogh A."/>
            <person name="McLean J."/>
            <person name="Moule S."/>
            <person name="Murphy L.D."/>
            <person name="Oliver S."/>
            <person name="Osborne J."/>
            <person name="Quail M.A."/>
            <person name="Rajandream M.A."/>
            <person name="Rogers J."/>
            <person name="Rutter S."/>
            <person name="Seeger K."/>
            <person name="Skelton S."/>
            <person name="Squares S."/>
            <person name="Squares R."/>
            <person name="Sulston J.E."/>
            <person name="Taylor K."/>
            <person name="Whitehead S."/>
            <person name="Barrell B.G."/>
        </authorList>
    </citation>
    <scope>NUCLEOTIDE SEQUENCE [LARGE SCALE GENOMIC DNA]</scope>
    <source>
        <strain>ATCC 25618 / H37Rv</strain>
    </source>
</reference>
<reference key="2">
    <citation type="journal article" date="1999" name="Mol. Microbiol.">
        <title>Differential expression of 10 sigma factor genes in Mycobacterium tuberculosis.</title>
        <authorList>
            <person name="Manganelli R."/>
            <person name="Dubnau E."/>
            <person name="Tyagi S."/>
            <person name="Kramer F.R."/>
            <person name="Smith I."/>
        </authorList>
    </citation>
    <scope>INDUCTION</scope>
    <source>
        <strain>ATCC 25618 / H37Rv</strain>
    </source>
</reference>
<reference key="3">
    <citation type="journal article" date="2006" name="J. Bacteriol.">
        <title>Mycobacterium tuberculosis SigM positively regulates Esx secreted protein and nonribosomal peptide synthetase genes and down regulates virulence-associated surface lipid synthesis.</title>
        <authorList>
            <person name="Raman S."/>
            <person name="Puyang X."/>
            <person name="Cheng T.Y."/>
            <person name="Young D.C."/>
            <person name="Moody D.B."/>
            <person name="Husson R.N."/>
        </authorList>
    </citation>
    <scope>FUNCTION</scope>
    <scope>INDUCTION</scope>
    <scope>DISRUPTION PHENOTYPE</scope>
    <source>
        <strain>ATCC 25618 / H37Rv</strain>
    </source>
</reference>
<reference key="4">
    <citation type="journal article" date="2006" name="Microbiology">
        <title>Examination of Mycobacterium tuberculosis sigma factor mutants using low-dose aerosol infection of guinea pigs suggests a role for SigC in pathogenesis.</title>
        <authorList>
            <person name="Karls R.K."/>
            <person name="Guarner J."/>
            <person name="McMurray D.N."/>
            <person name="Birkness K.A."/>
            <person name="Quinn F.D."/>
        </authorList>
    </citation>
    <scope>DISRUPTION PHENOTYPE</scope>
    <source>
        <strain>ATCC 25618 / H37Rv</strain>
    </source>
</reference>
<reference key="5">
    <citation type="journal article" date="2008" name="BMC Syst. Biol.">
        <title>targetTB: a target identification pipeline for Mycobacterium tuberculosis through an interactome, reactome and genome-scale structural analysis.</title>
        <authorList>
            <person name="Raman K."/>
            <person name="Yeturu K."/>
            <person name="Chandra N."/>
        </authorList>
    </citation>
    <scope>IDENTIFICATION AS A DRUG TARGET [LARGE SCALE ANALYSIS]</scope>
</reference>
<reference key="6">
    <citation type="journal article" date="2012" name="Infect. Immun.">
        <title>WhiB5, a transcriptional regulator that contributes to Mycobacterium tuberculosis virulence and reactivation.</title>
        <authorList>
            <person name="Casonato S."/>
            <person name="Cervantes Sanchez A."/>
            <person name="Haruki H."/>
            <person name="Rengifo Gonzalez M."/>
            <person name="Provvedi R."/>
            <person name="Dainese E."/>
            <person name="Jaouen T."/>
            <person name="Gola S."/>
            <person name="Bini E."/>
            <person name="Vicente M."/>
            <person name="Johnsson K."/>
            <person name="Ghisotti D."/>
            <person name="Palu G."/>
            <person name="Hernandez-Pando R."/>
            <person name="Manganelli R."/>
        </authorList>
    </citation>
    <scope>INDUCTION</scope>
    <source>
        <strain>ATCC 25618 / H37Rv</strain>
    </source>
</reference>
<sequence length="196" mass="21649">MPPPIGYCPAVGFGGRHERSDAELLAAHVAGDRYAFDQLFRRHHRQLHRLARLTSRTSEDADDALQDAMLSAHRGAGSFRYDAAVSSWLHRIVVNACLDRLRRAKAHPTAPLEDVYPVADRTAQVETAIAVQRALMRLPVEQRAAVVAVDMQGYSIADTARMLGVAEGTVKSRCARARARLARLLGYLNTGVNIRR</sequence>
<name>SIGM_MYCTU</name>
<comment type="function">
    <text evidence="5 7">Sigma factors are initiation factors that promote the attachment of RNA polymerase to specific initiation sites and are then released. Extracytoplasmic function (ECF) sigma factors are held in an inactive form by an anti-sigma factor (RsaM, AC L7N5D7) until released by regulated intramembrane proteolysis (Probable). This sigma factor is required for the synthesis of surface or secreted molecules.</text>
</comment>
<comment type="subunit">
    <text evidence="1">Interacts transiently with the RNA polymerase catalytic core formed by RpoA, RpoB, RpoC and RpoZ (2 alpha, 1 beta, 1 beta' and 1 omega subunit) to form the RNA polymerase holoenzyme that can initiate transcription. Interacts (via sigma-70 factor domain-4) with anti-sigma-M factor RsmA (AC L7N5D7) (By similarity).</text>
</comment>
<comment type="induction">
    <text evidence="3 5 6">Constitutively low in all growth stages; repressed by detergent (3.5-fold). Induced by WhiB5.</text>
</comment>
<comment type="domain">
    <text evidence="1">The sigma-70 factor domain-2 mediates sequence-specific interaction with the -10 element in promoter DNA, and plays an important role in melting the double-stranded DNA and the formation of the transcription bubble. The sigma-70 factor domain-2 mediates interaction with the RNA polymerase subunits RpoB and RpoC (By similarity).</text>
</comment>
<comment type="domain">
    <text evidence="1">The sigma-70 factor domain-4 contains a helix-turn-helix (H-T-H) motif that mediates interaction with the -35 element in promoter DNA. The domain also mediates interaction with the RNA polymerase subunit RpoA. Interactions between sigma-70 factor domain-4 and anti-sigma factors prevents interaction of sigma factors with the RNA polymerase catalytic core (By similarity).</text>
</comment>
<comment type="disruption phenotype">
    <text evidence="4 5">No effect on growth in culture, or in isolated macrophages; infected guinea pigs have a partially attenuated lung infection.</text>
</comment>
<comment type="miscellaneous">
    <text>Was identified as a high-confidence drug target.</text>
</comment>
<comment type="miscellaneous">
    <text evidence="7">Extracytoplasmic function (ECF) sigma factors are held in an inactive form by an anti-sigma factor until released by regulated intramembrane proteolysis (RIP). RIP occurs when an extracytoplasmic signal triggers a concerted proteolytic cascade to transmit information and elicit cellular responses. The membrane-spanning anti-sigma factor is first cut extracytoplasmically (site-1 protease, S1P), then within the membrane itself (site-2 protease, S2P, Rip1), while cytoplasmic proteases finish degrading the regulatory protein, liberating SigM (Probable).</text>
</comment>
<comment type="similarity">
    <text evidence="7">Belongs to the sigma-70 factor family. ECF subfamily.</text>
</comment>
<comment type="sequence caution" evidence="7">
    <conflict type="frameshift">
        <sequence resource="EMBL-CDS" id="CCP46740"/>
    </conflict>
</comment>
<protein>
    <recommendedName>
        <fullName>ECF RNA polymerase sigma factor SigM</fullName>
        <shortName>ECF sigma factor SigM</shortName>
    </recommendedName>
    <alternativeName>
        <fullName>Alternative RNA polymerase sigma factor SigM</fullName>
    </alternativeName>
    <alternativeName>
        <fullName>RNA polymerase sigma-M factor</fullName>
        <shortName>Sigma-M factor</shortName>
    </alternativeName>
</protein>
<gene>
    <name type="primary">sigM</name>
    <name type="ordered locus">Rv3911</name>
</gene>
<dbReference type="EMBL" id="AL123456">
    <property type="protein sequence ID" value="CCP46740.1"/>
    <property type="status" value="ALT_FRAME"/>
    <property type="molecule type" value="Genomic_DNA"/>
</dbReference>
<dbReference type="PIR" id="G70850">
    <property type="entry name" value="G70850"/>
</dbReference>
<dbReference type="RefSeq" id="NP_218428.1">
    <property type="nucleotide sequence ID" value="NC_000962.3"/>
</dbReference>
<dbReference type="RefSeq" id="WP_010886185.1">
    <property type="nucleotide sequence ID" value="NC_000962.3"/>
</dbReference>
<dbReference type="SMR" id="O53590"/>
<dbReference type="STRING" id="83332.Rv3911"/>
<dbReference type="PaxDb" id="83332-Rv3911"/>
<dbReference type="GeneID" id="886246"/>
<dbReference type="KEGG" id="mtu:Rv3911"/>
<dbReference type="KEGG" id="mtv:RVBD_3911"/>
<dbReference type="PATRIC" id="fig|83332.111.peg.4356"/>
<dbReference type="TubercuList" id="Rv3911"/>
<dbReference type="eggNOG" id="COG1595">
    <property type="taxonomic scope" value="Bacteria"/>
</dbReference>
<dbReference type="InParanoid" id="O53590"/>
<dbReference type="OrthoDB" id="9780326at2"/>
<dbReference type="Proteomes" id="UP000001584">
    <property type="component" value="Chromosome"/>
</dbReference>
<dbReference type="GO" id="GO:0005886">
    <property type="term" value="C:plasma membrane"/>
    <property type="evidence" value="ECO:0007005"/>
    <property type="project" value="MTBBASE"/>
</dbReference>
<dbReference type="GO" id="GO:0003677">
    <property type="term" value="F:DNA binding"/>
    <property type="evidence" value="ECO:0007669"/>
    <property type="project" value="UniProtKB-KW"/>
</dbReference>
<dbReference type="GO" id="GO:0016987">
    <property type="term" value="F:sigma factor activity"/>
    <property type="evidence" value="ECO:0000318"/>
    <property type="project" value="GO_Central"/>
</dbReference>
<dbReference type="GO" id="GO:0006352">
    <property type="term" value="P:DNA-templated transcription initiation"/>
    <property type="evidence" value="ECO:0007669"/>
    <property type="project" value="InterPro"/>
</dbReference>
<dbReference type="GO" id="GO:0045893">
    <property type="term" value="P:positive regulation of DNA-templated transcription"/>
    <property type="evidence" value="ECO:0000314"/>
    <property type="project" value="MTBBASE"/>
</dbReference>
<dbReference type="GO" id="GO:0006355">
    <property type="term" value="P:regulation of DNA-templated transcription"/>
    <property type="evidence" value="ECO:0000318"/>
    <property type="project" value="GO_Central"/>
</dbReference>
<dbReference type="GO" id="GO:0009415">
    <property type="term" value="P:response to water"/>
    <property type="evidence" value="ECO:0000270"/>
    <property type="project" value="MTBBASE"/>
</dbReference>
<dbReference type="GO" id="GO:0009410">
    <property type="term" value="P:response to xenobiotic stimulus"/>
    <property type="evidence" value="ECO:0000270"/>
    <property type="project" value="MTBBASE"/>
</dbReference>
<dbReference type="FunFam" id="1.10.1740.10:FF:000025">
    <property type="entry name" value="ECF RNA polymerase sigma factor SigM"/>
    <property type="match status" value="1"/>
</dbReference>
<dbReference type="Gene3D" id="1.10.1740.10">
    <property type="match status" value="1"/>
</dbReference>
<dbReference type="Gene3D" id="1.10.10.10">
    <property type="entry name" value="Winged helix-like DNA-binding domain superfamily/Winged helix DNA-binding domain"/>
    <property type="match status" value="1"/>
</dbReference>
<dbReference type="InterPro" id="IPR039425">
    <property type="entry name" value="RNA_pol_sigma-70-like"/>
</dbReference>
<dbReference type="InterPro" id="IPR014284">
    <property type="entry name" value="RNA_pol_sigma-70_dom"/>
</dbReference>
<dbReference type="InterPro" id="IPR007627">
    <property type="entry name" value="RNA_pol_sigma70_r2"/>
</dbReference>
<dbReference type="InterPro" id="IPR013249">
    <property type="entry name" value="RNA_pol_sigma70_r4_t2"/>
</dbReference>
<dbReference type="InterPro" id="IPR013325">
    <property type="entry name" value="RNA_pol_sigma_r2"/>
</dbReference>
<dbReference type="InterPro" id="IPR013324">
    <property type="entry name" value="RNA_pol_sigma_r3/r4-like"/>
</dbReference>
<dbReference type="InterPro" id="IPR036388">
    <property type="entry name" value="WH-like_DNA-bd_sf"/>
</dbReference>
<dbReference type="NCBIfam" id="NF007225">
    <property type="entry name" value="PRK09643.1"/>
    <property type="match status" value="1"/>
</dbReference>
<dbReference type="NCBIfam" id="TIGR02937">
    <property type="entry name" value="sigma70-ECF"/>
    <property type="match status" value="1"/>
</dbReference>
<dbReference type="PANTHER" id="PTHR43133:SF50">
    <property type="entry name" value="ECF RNA POLYMERASE SIGMA FACTOR SIGM"/>
    <property type="match status" value="1"/>
</dbReference>
<dbReference type="PANTHER" id="PTHR43133">
    <property type="entry name" value="RNA POLYMERASE ECF-TYPE SIGMA FACTO"/>
    <property type="match status" value="1"/>
</dbReference>
<dbReference type="Pfam" id="PF04542">
    <property type="entry name" value="Sigma70_r2"/>
    <property type="match status" value="1"/>
</dbReference>
<dbReference type="Pfam" id="PF08281">
    <property type="entry name" value="Sigma70_r4_2"/>
    <property type="match status" value="1"/>
</dbReference>
<dbReference type="SUPFAM" id="SSF88946">
    <property type="entry name" value="Sigma2 domain of RNA polymerase sigma factors"/>
    <property type="match status" value="1"/>
</dbReference>
<dbReference type="SUPFAM" id="SSF88659">
    <property type="entry name" value="Sigma3 and sigma4 domains of RNA polymerase sigma factors"/>
    <property type="match status" value="1"/>
</dbReference>
<organism>
    <name type="scientific">Mycobacterium tuberculosis (strain ATCC 25618 / H37Rv)</name>
    <dbReference type="NCBI Taxonomy" id="83332"/>
    <lineage>
        <taxon>Bacteria</taxon>
        <taxon>Bacillati</taxon>
        <taxon>Actinomycetota</taxon>
        <taxon>Actinomycetes</taxon>
        <taxon>Mycobacteriales</taxon>
        <taxon>Mycobacteriaceae</taxon>
        <taxon>Mycobacterium</taxon>
        <taxon>Mycobacterium tuberculosis complex</taxon>
    </lineage>
</organism>
<keyword id="KW-0238">DNA-binding</keyword>
<keyword id="KW-1185">Reference proteome</keyword>
<keyword id="KW-0731">Sigma factor</keyword>
<keyword id="KW-0804">Transcription</keyword>
<keyword id="KW-0805">Transcription regulation</keyword>
<feature type="chain" id="PRO_0000420400" description="ECF RNA polymerase sigma factor SigM">
    <location>
        <begin position="1"/>
        <end position="196"/>
    </location>
</feature>
<feature type="DNA-binding region" description="H-T-H motif" evidence="1">
    <location>
        <begin position="156"/>
        <end position="175"/>
    </location>
</feature>
<feature type="region of interest" description="Sigma-70 factor domain-2">
    <location>
        <begin position="39"/>
        <end position="105"/>
    </location>
</feature>
<feature type="region of interest" description="Sigma-70 factor domain-4">
    <location>
        <begin position="130"/>
        <end position="181"/>
    </location>
</feature>
<feature type="short sequence motif" description="Polymerase core binding" evidence="2">
    <location>
        <begin position="63"/>
        <end position="66"/>
    </location>
</feature>
<accession>O53590</accession>
<accession>L0TH42</accession>
<proteinExistence type="evidence at transcript level"/>